<protein>
    <recommendedName>
        <fullName evidence="1">CCA-adding enzyme</fullName>
        <ecNumber evidence="1">2.7.7.72</ecNumber>
    </recommendedName>
    <alternativeName>
        <fullName evidence="1">CCA tRNA nucleotidyltransferase</fullName>
    </alternativeName>
    <alternativeName>
        <fullName evidence="1">tRNA CCA-pyrophosphorylase</fullName>
    </alternativeName>
    <alternativeName>
        <fullName evidence="1">tRNA adenylyl-/cytidylyl- transferase</fullName>
    </alternativeName>
    <alternativeName>
        <fullName evidence="1">tRNA nucleotidyltransferase</fullName>
    </alternativeName>
    <alternativeName>
        <fullName evidence="1">tRNA-NT</fullName>
    </alternativeName>
</protein>
<reference key="1">
    <citation type="journal article" date="2009" name="Proc. Natl. Acad. Sci. U.S.A.">
        <title>Hamiltonella defensa, genome evolution of protective bacterial endosymbiont from pathogenic ancestors.</title>
        <authorList>
            <person name="Degnan P.H."/>
            <person name="Yu Y."/>
            <person name="Sisneros N."/>
            <person name="Wing R.A."/>
            <person name="Moran N.A."/>
        </authorList>
    </citation>
    <scope>NUCLEOTIDE SEQUENCE [LARGE SCALE GENOMIC DNA]</scope>
    <source>
        <strain>5AT</strain>
    </source>
</reference>
<keyword id="KW-0067">ATP-binding</keyword>
<keyword id="KW-0460">Magnesium</keyword>
<keyword id="KW-0479">Metal-binding</keyword>
<keyword id="KW-0547">Nucleotide-binding</keyword>
<keyword id="KW-0548">Nucleotidyltransferase</keyword>
<keyword id="KW-0692">RNA repair</keyword>
<keyword id="KW-0694">RNA-binding</keyword>
<keyword id="KW-0808">Transferase</keyword>
<keyword id="KW-0819">tRNA processing</keyword>
<gene>
    <name evidence="1" type="primary">cca</name>
    <name type="ordered locus">HDEF_1538</name>
</gene>
<proteinExistence type="inferred from homology"/>
<feature type="chain" id="PRO_1000214137" description="CCA-adding enzyme">
    <location>
        <begin position="1"/>
        <end position="405"/>
    </location>
</feature>
<feature type="domain" description="HD" evidence="2">
    <location>
        <begin position="220"/>
        <end position="326"/>
    </location>
</feature>
<feature type="binding site" evidence="1">
    <location>
        <position position="8"/>
    </location>
    <ligand>
        <name>ATP</name>
        <dbReference type="ChEBI" id="CHEBI:30616"/>
    </ligand>
</feature>
<feature type="binding site" evidence="1">
    <location>
        <position position="8"/>
    </location>
    <ligand>
        <name>CTP</name>
        <dbReference type="ChEBI" id="CHEBI:37563"/>
    </ligand>
</feature>
<feature type="binding site" evidence="1">
    <location>
        <position position="11"/>
    </location>
    <ligand>
        <name>ATP</name>
        <dbReference type="ChEBI" id="CHEBI:30616"/>
    </ligand>
</feature>
<feature type="binding site" evidence="1">
    <location>
        <position position="11"/>
    </location>
    <ligand>
        <name>CTP</name>
        <dbReference type="ChEBI" id="CHEBI:37563"/>
    </ligand>
</feature>
<feature type="binding site" evidence="1">
    <location>
        <position position="21"/>
    </location>
    <ligand>
        <name>Mg(2+)</name>
        <dbReference type="ChEBI" id="CHEBI:18420"/>
    </ligand>
</feature>
<feature type="binding site" evidence="1">
    <location>
        <position position="23"/>
    </location>
    <ligand>
        <name>Mg(2+)</name>
        <dbReference type="ChEBI" id="CHEBI:18420"/>
    </ligand>
</feature>
<feature type="binding site" evidence="1">
    <location>
        <position position="91"/>
    </location>
    <ligand>
        <name>ATP</name>
        <dbReference type="ChEBI" id="CHEBI:30616"/>
    </ligand>
</feature>
<feature type="binding site" evidence="1">
    <location>
        <position position="91"/>
    </location>
    <ligand>
        <name>CTP</name>
        <dbReference type="ChEBI" id="CHEBI:37563"/>
    </ligand>
</feature>
<feature type="binding site" evidence="1">
    <location>
        <position position="137"/>
    </location>
    <ligand>
        <name>ATP</name>
        <dbReference type="ChEBI" id="CHEBI:30616"/>
    </ligand>
</feature>
<feature type="binding site" evidence="1">
    <location>
        <position position="137"/>
    </location>
    <ligand>
        <name>CTP</name>
        <dbReference type="ChEBI" id="CHEBI:37563"/>
    </ligand>
</feature>
<feature type="binding site" evidence="1">
    <location>
        <position position="140"/>
    </location>
    <ligand>
        <name>ATP</name>
        <dbReference type="ChEBI" id="CHEBI:30616"/>
    </ligand>
</feature>
<feature type="binding site" evidence="1">
    <location>
        <position position="140"/>
    </location>
    <ligand>
        <name>CTP</name>
        <dbReference type="ChEBI" id="CHEBI:37563"/>
    </ligand>
</feature>
<dbReference type="EC" id="2.7.7.72" evidence="1"/>
<dbReference type="EMBL" id="CP001277">
    <property type="protein sequence ID" value="ACQ68157.1"/>
    <property type="molecule type" value="Genomic_DNA"/>
</dbReference>
<dbReference type="RefSeq" id="WP_015873925.1">
    <property type="nucleotide sequence ID" value="NC_012751.1"/>
</dbReference>
<dbReference type="SMR" id="C4K6G4"/>
<dbReference type="STRING" id="572265.HDEF_1538"/>
<dbReference type="GeneID" id="66261182"/>
<dbReference type="KEGG" id="hde:HDEF_1538"/>
<dbReference type="eggNOG" id="COG0617">
    <property type="taxonomic scope" value="Bacteria"/>
</dbReference>
<dbReference type="HOGENOM" id="CLU_015961_1_1_6"/>
<dbReference type="Proteomes" id="UP000002334">
    <property type="component" value="Chromosome"/>
</dbReference>
<dbReference type="GO" id="GO:0005524">
    <property type="term" value="F:ATP binding"/>
    <property type="evidence" value="ECO:0007669"/>
    <property type="project" value="UniProtKB-UniRule"/>
</dbReference>
<dbReference type="GO" id="GO:0004810">
    <property type="term" value="F:CCA tRNA nucleotidyltransferase activity"/>
    <property type="evidence" value="ECO:0007669"/>
    <property type="project" value="UniProtKB-UniRule"/>
</dbReference>
<dbReference type="GO" id="GO:0000287">
    <property type="term" value="F:magnesium ion binding"/>
    <property type="evidence" value="ECO:0007669"/>
    <property type="project" value="UniProtKB-UniRule"/>
</dbReference>
<dbReference type="GO" id="GO:0000049">
    <property type="term" value="F:tRNA binding"/>
    <property type="evidence" value="ECO:0007669"/>
    <property type="project" value="UniProtKB-UniRule"/>
</dbReference>
<dbReference type="GO" id="GO:0042245">
    <property type="term" value="P:RNA repair"/>
    <property type="evidence" value="ECO:0007669"/>
    <property type="project" value="UniProtKB-KW"/>
</dbReference>
<dbReference type="GO" id="GO:0001680">
    <property type="term" value="P:tRNA 3'-terminal CCA addition"/>
    <property type="evidence" value="ECO:0007669"/>
    <property type="project" value="UniProtKB-UniRule"/>
</dbReference>
<dbReference type="CDD" id="cd05398">
    <property type="entry name" value="NT_ClassII-CCAase"/>
    <property type="match status" value="1"/>
</dbReference>
<dbReference type="Gene3D" id="3.30.460.10">
    <property type="entry name" value="Beta Polymerase, domain 2"/>
    <property type="match status" value="1"/>
</dbReference>
<dbReference type="Gene3D" id="1.10.3090.10">
    <property type="entry name" value="cca-adding enzyme, domain 2"/>
    <property type="match status" value="1"/>
</dbReference>
<dbReference type="HAMAP" id="MF_01262">
    <property type="entry name" value="CCA_bact_type2"/>
    <property type="match status" value="1"/>
</dbReference>
<dbReference type="InterPro" id="IPR012006">
    <property type="entry name" value="CCA_bact"/>
</dbReference>
<dbReference type="InterPro" id="IPR006674">
    <property type="entry name" value="HD_domain"/>
</dbReference>
<dbReference type="InterPro" id="IPR043519">
    <property type="entry name" value="NT_sf"/>
</dbReference>
<dbReference type="InterPro" id="IPR002646">
    <property type="entry name" value="PolA_pol_head_dom"/>
</dbReference>
<dbReference type="InterPro" id="IPR032828">
    <property type="entry name" value="PolyA_RNA-bd"/>
</dbReference>
<dbReference type="InterPro" id="IPR050124">
    <property type="entry name" value="tRNA_CCA-adding_enzyme"/>
</dbReference>
<dbReference type="NCBIfam" id="NF008137">
    <property type="entry name" value="PRK10885.1"/>
    <property type="match status" value="1"/>
</dbReference>
<dbReference type="PANTHER" id="PTHR47545">
    <property type="entry name" value="MULTIFUNCTIONAL CCA PROTEIN"/>
    <property type="match status" value="1"/>
</dbReference>
<dbReference type="PANTHER" id="PTHR47545:SF1">
    <property type="entry name" value="MULTIFUNCTIONAL CCA PROTEIN"/>
    <property type="match status" value="1"/>
</dbReference>
<dbReference type="Pfam" id="PF01743">
    <property type="entry name" value="PolyA_pol"/>
    <property type="match status" value="1"/>
</dbReference>
<dbReference type="Pfam" id="PF12627">
    <property type="entry name" value="PolyA_pol_RNAbd"/>
    <property type="match status" value="1"/>
</dbReference>
<dbReference type="PIRSF" id="PIRSF000813">
    <property type="entry name" value="CCA_bact"/>
    <property type="match status" value="1"/>
</dbReference>
<dbReference type="SUPFAM" id="SSF81301">
    <property type="entry name" value="Nucleotidyltransferase"/>
    <property type="match status" value="1"/>
</dbReference>
<dbReference type="SUPFAM" id="SSF81891">
    <property type="entry name" value="Poly A polymerase C-terminal region-like"/>
    <property type="match status" value="1"/>
</dbReference>
<dbReference type="PROSITE" id="PS51831">
    <property type="entry name" value="HD"/>
    <property type="match status" value="1"/>
</dbReference>
<accession>C4K6G4</accession>
<name>CCA_HAMD5</name>
<organism>
    <name type="scientific">Hamiltonella defensa subsp. Acyrthosiphon pisum (strain 5AT)</name>
    <dbReference type="NCBI Taxonomy" id="572265"/>
    <lineage>
        <taxon>Bacteria</taxon>
        <taxon>Pseudomonadati</taxon>
        <taxon>Pseudomonadota</taxon>
        <taxon>Gammaproteobacteria</taxon>
        <taxon>Enterobacterales</taxon>
        <taxon>Enterobacteriaceae</taxon>
        <taxon>aphid secondary symbionts</taxon>
        <taxon>Candidatus Hamiltonella</taxon>
    </lineage>
</organism>
<sequence length="405" mass="46272">MNVYLVGGAVRNRLLKLPVTERDWVVVGATPEEMLLLGYKKVGKNFPVFLHPETKEEYALARTERKMAEGHTGFACYASPDVTLEEDLLRRDLTINAIACNDKGDLIDPYQGEKDLNQLILRHVSEAFIEDPLRVLRVARFAAQFAHLGFSIDSVTLDLMTKISQSGELLTLSPERVWKETEKALLSPSPHIYFQVLKHCSAILVLFPEIDTLCSPLRCPLSHGLSTLSIAAKLTDQKEVRFAALCHILGKKLTEYDVLGTHDRAVLKRVPLCDLNKIEQLCERLKLPNLFRELLKHTLKYRGLVTIINRLSFPLLLNFFDELDLWRKPYRLEQLILISKADESTEGGVEGKHDYQAQYVREAFNIARAVSVKKILEGGFRKEAIQKELTRRRNQALDQWQKQKT</sequence>
<comment type="function">
    <text evidence="1">Catalyzes the addition and repair of the essential 3'-terminal CCA sequence in tRNAs without using a nucleic acid template. Adds these three nucleotides in the order of C, C, and A to the tRNA nucleotide-73, using CTP and ATP as substrates and producing inorganic pyrophosphate. tRNA 3'-terminal CCA addition is required both for tRNA processing and repair. Also involved in tRNA surveillance by mediating tandem CCA addition to generate a CCACCA at the 3' terminus of unstable tRNAs. While stable tRNAs receive only 3'-terminal CCA, unstable tRNAs are marked with CCACCA and rapidly degraded.</text>
</comment>
<comment type="catalytic activity">
    <reaction evidence="1">
        <text>a tRNA precursor + 2 CTP + ATP = a tRNA with a 3' CCA end + 3 diphosphate</text>
        <dbReference type="Rhea" id="RHEA:14433"/>
        <dbReference type="Rhea" id="RHEA-COMP:10465"/>
        <dbReference type="Rhea" id="RHEA-COMP:10468"/>
        <dbReference type="ChEBI" id="CHEBI:30616"/>
        <dbReference type="ChEBI" id="CHEBI:33019"/>
        <dbReference type="ChEBI" id="CHEBI:37563"/>
        <dbReference type="ChEBI" id="CHEBI:74896"/>
        <dbReference type="ChEBI" id="CHEBI:83071"/>
        <dbReference type="EC" id="2.7.7.72"/>
    </reaction>
</comment>
<comment type="catalytic activity">
    <reaction evidence="1">
        <text>a tRNA with a 3' CCA end + 2 CTP + ATP = a tRNA with a 3' CCACCA end + 3 diphosphate</text>
        <dbReference type="Rhea" id="RHEA:76235"/>
        <dbReference type="Rhea" id="RHEA-COMP:10468"/>
        <dbReference type="Rhea" id="RHEA-COMP:18655"/>
        <dbReference type="ChEBI" id="CHEBI:30616"/>
        <dbReference type="ChEBI" id="CHEBI:33019"/>
        <dbReference type="ChEBI" id="CHEBI:37563"/>
        <dbReference type="ChEBI" id="CHEBI:83071"/>
        <dbReference type="ChEBI" id="CHEBI:195187"/>
    </reaction>
    <physiologicalReaction direction="left-to-right" evidence="1">
        <dbReference type="Rhea" id="RHEA:76236"/>
    </physiologicalReaction>
</comment>
<comment type="cofactor">
    <cofactor evidence="1">
        <name>Mg(2+)</name>
        <dbReference type="ChEBI" id="CHEBI:18420"/>
    </cofactor>
</comment>
<comment type="miscellaneous">
    <text evidence="1">A single active site specifically recognizes both ATP and CTP and is responsible for their addition.</text>
</comment>
<comment type="similarity">
    <text evidence="1">Belongs to the tRNA nucleotidyltransferase/poly(A) polymerase family. Bacterial CCA-adding enzyme type 2 subfamily.</text>
</comment>
<evidence type="ECO:0000255" key="1">
    <source>
        <dbReference type="HAMAP-Rule" id="MF_01262"/>
    </source>
</evidence>
<evidence type="ECO:0000255" key="2">
    <source>
        <dbReference type="PROSITE-ProRule" id="PRU01175"/>
    </source>
</evidence>